<protein>
    <recommendedName>
        <fullName evidence="1">Dihydroorotate dehydrogenase (quinone)</fullName>
        <ecNumber evidence="1">1.3.5.2</ecNumber>
    </recommendedName>
    <alternativeName>
        <fullName evidence="1">DHOdehase</fullName>
        <shortName evidence="1">DHOD</shortName>
        <shortName evidence="1">DHODase</shortName>
    </alternativeName>
    <alternativeName>
        <fullName evidence="1">Dihydroorotate oxidase</fullName>
    </alternativeName>
</protein>
<accession>Q92S77</accession>
<gene>
    <name evidence="1" type="primary">pyrD</name>
    <name type="ordered locus">R00549</name>
    <name type="ORF">SMc02245</name>
</gene>
<feature type="chain" id="PRO_1000024214" description="Dihydroorotate dehydrogenase (quinone)">
    <location>
        <begin position="1"/>
        <end position="362"/>
    </location>
</feature>
<feature type="active site" description="Nucleophile" evidence="1">
    <location>
        <position position="173"/>
    </location>
</feature>
<feature type="binding site" evidence="1">
    <location>
        <begin position="62"/>
        <end position="66"/>
    </location>
    <ligand>
        <name>FMN</name>
        <dbReference type="ChEBI" id="CHEBI:58210"/>
    </ligand>
</feature>
<feature type="binding site" evidence="1">
    <location>
        <position position="66"/>
    </location>
    <ligand>
        <name>substrate</name>
    </ligand>
</feature>
<feature type="binding site" evidence="1">
    <location>
        <position position="86"/>
    </location>
    <ligand>
        <name>FMN</name>
        <dbReference type="ChEBI" id="CHEBI:58210"/>
    </ligand>
</feature>
<feature type="binding site" evidence="1">
    <location>
        <begin position="111"/>
        <end position="115"/>
    </location>
    <ligand>
        <name>substrate</name>
    </ligand>
</feature>
<feature type="binding site" evidence="1">
    <location>
        <position position="139"/>
    </location>
    <ligand>
        <name>FMN</name>
        <dbReference type="ChEBI" id="CHEBI:58210"/>
    </ligand>
</feature>
<feature type="binding site" evidence="1">
    <location>
        <position position="170"/>
    </location>
    <ligand>
        <name>FMN</name>
        <dbReference type="ChEBI" id="CHEBI:58210"/>
    </ligand>
</feature>
<feature type="binding site" evidence="1">
    <location>
        <position position="170"/>
    </location>
    <ligand>
        <name>substrate</name>
    </ligand>
</feature>
<feature type="binding site" evidence="1">
    <location>
        <position position="175"/>
    </location>
    <ligand>
        <name>substrate</name>
    </ligand>
</feature>
<feature type="binding site" evidence="1">
    <location>
        <position position="215"/>
    </location>
    <ligand>
        <name>FMN</name>
        <dbReference type="ChEBI" id="CHEBI:58210"/>
    </ligand>
</feature>
<feature type="binding site" evidence="1">
    <location>
        <position position="243"/>
    </location>
    <ligand>
        <name>FMN</name>
        <dbReference type="ChEBI" id="CHEBI:58210"/>
    </ligand>
</feature>
<feature type="binding site" evidence="1">
    <location>
        <begin position="244"/>
        <end position="245"/>
    </location>
    <ligand>
        <name>substrate</name>
    </ligand>
</feature>
<feature type="binding site" evidence="1">
    <location>
        <position position="266"/>
    </location>
    <ligand>
        <name>FMN</name>
        <dbReference type="ChEBI" id="CHEBI:58210"/>
    </ligand>
</feature>
<feature type="binding site" evidence="1">
    <location>
        <position position="295"/>
    </location>
    <ligand>
        <name>FMN</name>
        <dbReference type="ChEBI" id="CHEBI:58210"/>
    </ligand>
</feature>
<feature type="binding site" evidence="1">
    <location>
        <begin position="316"/>
        <end position="317"/>
    </location>
    <ligand>
        <name>FMN</name>
        <dbReference type="ChEBI" id="CHEBI:58210"/>
    </ligand>
</feature>
<comment type="function">
    <text evidence="1">Catalyzes the conversion of dihydroorotate to orotate with quinone as electron acceptor.</text>
</comment>
<comment type="catalytic activity">
    <reaction evidence="1">
        <text>(S)-dihydroorotate + a quinone = orotate + a quinol</text>
        <dbReference type="Rhea" id="RHEA:30187"/>
        <dbReference type="ChEBI" id="CHEBI:24646"/>
        <dbReference type="ChEBI" id="CHEBI:30839"/>
        <dbReference type="ChEBI" id="CHEBI:30864"/>
        <dbReference type="ChEBI" id="CHEBI:132124"/>
        <dbReference type="EC" id="1.3.5.2"/>
    </reaction>
</comment>
<comment type="cofactor">
    <cofactor evidence="1">
        <name>FMN</name>
        <dbReference type="ChEBI" id="CHEBI:58210"/>
    </cofactor>
    <text evidence="1">Binds 1 FMN per subunit.</text>
</comment>
<comment type="pathway">
    <text evidence="1">Pyrimidine metabolism; UMP biosynthesis via de novo pathway; orotate from (S)-dihydroorotate (quinone route): step 1/1.</text>
</comment>
<comment type="subunit">
    <text evidence="1">Monomer.</text>
</comment>
<comment type="subcellular location">
    <subcellularLocation>
        <location evidence="1">Cell membrane</location>
        <topology evidence="1">Peripheral membrane protein</topology>
    </subcellularLocation>
</comment>
<comment type="similarity">
    <text evidence="1">Belongs to the dihydroorotate dehydrogenase family. Type 2 subfamily.</text>
</comment>
<evidence type="ECO:0000255" key="1">
    <source>
        <dbReference type="HAMAP-Rule" id="MF_00225"/>
    </source>
</evidence>
<dbReference type="EC" id="1.3.5.2" evidence="1"/>
<dbReference type="EMBL" id="AL591688">
    <property type="protein sequence ID" value="CAC45121.1"/>
    <property type="molecule type" value="Genomic_DNA"/>
</dbReference>
<dbReference type="RefSeq" id="NP_384655.1">
    <property type="nucleotide sequence ID" value="NC_003047.1"/>
</dbReference>
<dbReference type="RefSeq" id="WP_010968651.1">
    <property type="nucleotide sequence ID" value="NC_003047.1"/>
</dbReference>
<dbReference type="SMR" id="Q92S77"/>
<dbReference type="EnsemblBacteria" id="CAC45121">
    <property type="protein sequence ID" value="CAC45121"/>
    <property type="gene ID" value="SMc02245"/>
</dbReference>
<dbReference type="KEGG" id="sme:SMc02245"/>
<dbReference type="PATRIC" id="fig|266834.11.peg.1924"/>
<dbReference type="eggNOG" id="COG0167">
    <property type="taxonomic scope" value="Bacteria"/>
</dbReference>
<dbReference type="HOGENOM" id="CLU_013640_2_1_5"/>
<dbReference type="OrthoDB" id="9802377at2"/>
<dbReference type="UniPathway" id="UPA00070">
    <property type="reaction ID" value="UER00946"/>
</dbReference>
<dbReference type="Proteomes" id="UP000001976">
    <property type="component" value="Chromosome"/>
</dbReference>
<dbReference type="GO" id="GO:0005737">
    <property type="term" value="C:cytoplasm"/>
    <property type="evidence" value="ECO:0007669"/>
    <property type="project" value="InterPro"/>
</dbReference>
<dbReference type="GO" id="GO:0005886">
    <property type="term" value="C:plasma membrane"/>
    <property type="evidence" value="ECO:0007669"/>
    <property type="project" value="UniProtKB-SubCell"/>
</dbReference>
<dbReference type="GO" id="GO:0106430">
    <property type="term" value="F:dihydroorotate dehydrogenase (quinone) activity"/>
    <property type="evidence" value="ECO:0007669"/>
    <property type="project" value="UniProtKB-EC"/>
</dbReference>
<dbReference type="GO" id="GO:0006207">
    <property type="term" value="P:'de novo' pyrimidine nucleobase biosynthetic process"/>
    <property type="evidence" value="ECO:0007669"/>
    <property type="project" value="InterPro"/>
</dbReference>
<dbReference type="GO" id="GO:0044205">
    <property type="term" value="P:'de novo' UMP biosynthetic process"/>
    <property type="evidence" value="ECO:0007669"/>
    <property type="project" value="UniProtKB-UniRule"/>
</dbReference>
<dbReference type="CDD" id="cd04738">
    <property type="entry name" value="DHOD_2_like"/>
    <property type="match status" value="1"/>
</dbReference>
<dbReference type="Gene3D" id="3.20.20.70">
    <property type="entry name" value="Aldolase class I"/>
    <property type="match status" value="1"/>
</dbReference>
<dbReference type="HAMAP" id="MF_00225">
    <property type="entry name" value="DHO_dh_type2"/>
    <property type="match status" value="1"/>
</dbReference>
<dbReference type="InterPro" id="IPR013785">
    <property type="entry name" value="Aldolase_TIM"/>
</dbReference>
<dbReference type="InterPro" id="IPR050074">
    <property type="entry name" value="DHO_dehydrogenase"/>
</dbReference>
<dbReference type="InterPro" id="IPR005719">
    <property type="entry name" value="Dihydroorotate_DH_2"/>
</dbReference>
<dbReference type="InterPro" id="IPR005720">
    <property type="entry name" value="Dihydroorotate_DH_cat"/>
</dbReference>
<dbReference type="InterPro" id="IPR001295">
    <property type="entry name" value="Dihydroorotate_DH_CS"/>
</dbReference>
<dbReference type="NCBIfam" id="NF003645">
    <property type="entry name" value="PRK05286.1-2"/>
    <property type="match status" value="1"/>
</dbReference>
<dbReference type="NCBIfam" id="NF003652">
    <property type="entry name" value="PRK05286.2-5"/>
    <property type="match status" value="1"/>
</dbReference>
<dbReference type="NCBIfam" id="TIGR01036">
    <property type="entry name" value="pyrD_sub2"/>
    <property type="match status" value="1"/>
</dbReference>
<dbReference type="PANTHER" id="PTHR48109:SF4">
    <property type="entry name" value="DIHYDROOROTATE DEHYDROGENASE (QUINONE), MITOCHONDRIAL"/>
    <property type="match status" value="1"/>
</dbReference>
<dbReference type="PANTHER" id="PTHR48109">
    <property type="entry name" value="DIHYDROOROTATE DEHYDROGENASE (QUINONE), MITOCHONDRIAL-RELATED"/>
    <property type="match status" value="1"/>
</dbReference>
<dbReference type="Pfam" id="PF01180">
    <property type="entry name" value="DHO_dh"/>
    <property type="match status" value="1"/>
</dbReference>
<dbReference type="SUPFAM" id="SSF51395">
    <property type="entry name" value="FMN-linked oxidoreductases"/>
    <property type="match status" value="1"/>
</dbReference>
<dbReference type="PROSITE" id="PS00911">
    <property type="entry name" value="DHODEHASE_1"/>
    <property type="match status" value="1"/>
</dbReference>
<dbReference type="PROSITE" id="PS00912">
    <property type="entry name" value="DHODEHASE_2"/>
    <property type="match status" value="1"/>
</dbReference>
<keyword id="KW-1003">Cell membrane</keyword>
<keyword id="KW-0285">Flavoprotein</keyword>
<keyword id="KW-0288">FMN</keyword>
<keyword id="KW-0472">Membrane</keyword>
<keyword id="KW-0560">Oxidoreductase</keyword>
<keyword id="KW-0665">Pyrimidine biosynthesis</keyword>
<keyword id="KW-1185">Reference proteome</keyword>
<organism>
    <name type="scientific">Rhizobium meliloti (strain 1021)</name>
    <name type="common">Ensifer meliloti</name>
    <name type="synonym">Sinorhizobium meliloti</name>
    <dbReference type="NCBI Taxonomy" id="266834"/>
    <lineage>
        <taxon>Bacteria</taxon>
        <taxon>Pseudomonadati</taxon>
        <taxon>Pseudomonadota</taxon>
        <taxon>Alphaproteobacteria</taxon>
        <taxon>Hyphomicrobiales</taxon>
        <taxon>Rhizobiaceae</taxon>
        <taxon>Sinorhizobium/Ensifer group</taxon>
        <taxon>Sinorhizobium</taxon>
    </lineage>
</organism>
<reference key="1">
    <citation type="journal article" date="2001" name="Proc. Natl. Acad. Sci. U.S.A.">
        <title>Analysis of the chromosome sequence of the legume symbiont Sinorhizobium meliloti strain 1021.</title>
        <authorList>
            <person name="Capela D."/>
            <person name="Barloy-Hubler F."/>
            <person name="Gouzy J."/>
            <person name="Bothe G."/>
            <person name="Ampe F."/>
            <person name="Batut J."/>
            <person name="Boistard P."/>
            <person name="Becker A."/>
            <person name="Boutry M."/>
            <person name="Cadieu E."/>
            <person name="Dreano S."/>
            <person name="Gloux S."/>
            <person name="Godrie T."/>
            <person name="Goffeau A."/>
            <person name="Kahn D."/>
            <person name="Kiss E."/>
            <person name="Lelaure V."/>
            <person name="Masuy D."/>
            <person name="Pohl T."/>
            <person name="Portetelle D."/>
            <person name="Puehler A."/>
            <person name="Purnelle B."/>
            <person name="Ramsperger U."/>
            <person name="Renard C."/>
            <person name="Thebault P."/>
            <person name="Vandenbol M."/>
            <person name="Weidner S."/>
            <person name="Galibert F."/>
        </authorList>
    </citation>
    <scope>NUCLEOTIDE SEQUENCE [LARGE SCALE GENOMIC DNA]</scope>
    <source>
        <strain>1021</strain>
    </source>
</reference>
<reference key="2">
    <citation type="journal article" date="2001" name="Science">
        <title>The composite genome of the legume symbiont Sinorhizobium meliloti.</title>
        <authorList>
            <person name="Galibert F."/>
            <person name="Finan T.M."/>
            <person name="Long S.R."/>
            <person name="Puehler A."/>
            <person name="Abola P."/>
            <person name="Ampe F."/>
            <person name="Barloy-Hubler F."/>
            <person name="Barnett M.J."/>
            <person name="Becker A."/>
            <person name="Boistard P."/>
            <person name="Bothe G."/>
            <person name="Boutry M."/>
            <person name="Bowser L."/>
            <person name="Buhrmester J."/>
            <person name="Cadieu E."/>
            <person name="Capela D."/>
            <person name="Chain P."/>
            <person name="Cowie A."/>
            <person name="Davis R.W."/>
            <person name="Dreano S."/>
            <person name="Federspiel N.A."/>
            <person name="Fisher R.F."/>
            <person name="Gloux S."/>
            <person name="Godrie T."/>
            <person name="Goffeau A."/>
            <person name="Golding B."/>
            <person name="Gouzy J."/>
            <person name="Gurjal M."/>
            <person name="Hernandez-Lucas I."/>
            <person name="Hong A."/>
            <person name="Huizar L."/>
            <person name="Hyman R.W."/>
            <person name="Jones T."/>
            <person name="Kahn D."/>
            <person name="Kahn M.L."/>
            <person name="Kalman S."/>
            <person name="Keating D.H."/>
            <person name="Kiss E."/>
            <person name="Komp C."/>
            <person name="Lelaure V."/>
            <person name="Masuy D."/>
            <person name="Palm C."/>
            <person name="Peck M.C."/>
            <person name="Pohl T.M."/>
            <person name="Portetelle D."/>
            <person name="Purnelle B."/>
            <person name="Ramsperger U."/>
            <person name="Surzycki R."/>
            <person name="Thebault P."/>
            <person name="Vandenbol M."/>
            <person name="Vorhoelter F.J."/>
            <person name="Weidner S."/>
            <person name="Wells D.H."/>
            <person name="Wong K."/>
            <person name="Yeh K.-C."/>
            <person name="Batut J."/>
        </authorList>
    </citation>
    <scope>NUCLEOTIDE SEQUENCE [LARGE SCALE GENOMIC DNA]</scope>
    <source>
        <strain>1021</strain>
    </source>
</reference>
<sequence length="362" mass="38635">MIGQLEHLARRGLFLFDPEAAHGLSIKALKSGLVPSCAAPADPRLGQTVAGLVFSNPIGMAAGYDKNAEVPEALLKIGFGFTEIGTVTPRPQAGNDKPRLFRLVEDEAVINRLGFNNEGHGAALARLKACSREALIGVNIGANKDSADRIADYVTGIRTFYAVARYFTANISSPNTPGLRDLQARESLSALLSAVLAARDDEARKGGRQVPVFLKIAPDLTEEGMDDIAAEVLAHGLDGLIVSNTTLSREGLKDRRQANEAGGLSGKPLFEKSTAVLARMRKRVGPHLPIIGVGGVCSAETAAEKIRAGADLVQLYSCMIYEGPGLPGRIVRGLSALCEREKLASIRDIRDSRLDYWSGRNV</sequence>
<name>PYRD_RHIME</name>
<proteinExistence type="inferred from homology"/>